<feature type="chain" id="PRO_1000043688" description="GTP cyclohydrolase 1">
    <location>
        <begin position="1"/>
        <end position="189"/>
    </location>
</feature>
<feature type="binding site" evidence="2">
    <location>
        <position position="76"/>
    </location>
    <ligand>
        <name>Zn(2+)</name>
        <dbReference type="ChEBI" id="CHEBI:29105"/>
    </ligand>
</feature>
<feature type="binding site" evidence="2">
    <location>
        <position position="79"/>
    </location>
    <ligand>
        <name>Zn(2+)</name>
        <dbReference type="ChEBI" id="CHEBI:29105"/>
    </ligand>
</feature>
<feature type="binding site" evidence="2">
    <location>
        <position position="149"/>
    </location>
    <ligand>
        <name>Zn(2+)</name>
        <dbReference type="ChEBI" id="CHEBI:29105"/>
    </ligand>
</feature>
<name>GCH1_DEHMC</name>
<keyword id="KW-0342">GTP-binding</keyword>
<keyword id="KW-0378">Hydrolase</keyword>
<keyword id="KW-0479">Metal-binding</keyword>
<keyword id="KW-0547">Nucleotide-binding</keyword>
<keyword id="KW-0554">One-carbon metabolism</keyword>
<keyword id="KW-0862">Zinc</keyword>
<accession>Q3ZYB5</accession>
<evidence type="ECO:0000250" key="1"/>
<evidence type="ECO:0000255" key="2">
    <source>
        <dbReference type="HAMAP-Rule" id="MF_00223"/>
    </source>
</evidence>
<proteinExistence type="inferred from homology"/>
<gene>
    <name evidence="2" type="primary">folE</name>
    <name type="ordered locus">cbdbA1120</name>
</gene>
<comment type="catalytic activity">
    <reaction evidence="2">
        <text>GTP + H2O = 7,8-dihydroneopterin 3'-triphosphate + formate + H(+)</text>
        <dbReference type="Rhea" id="RHEA:17473"/>
        <dbReference type="ChEBI" id="CHEBI:15377"/>
        <dbReference type="ChEBI" id="CHEBI:15378"/>
        <dbReference type="ChEBI" id="CHEBI:15740"/>
        <dbReference type="ChEBI" id="CHEBI:37565"/>
        <dbReference type="ChEBI" id="CHEBI:58462"/>
        <dbReference type="EC" id="3.5.4.16"/>
    </reaction>
</comment>
<comment type="pathway">
    <text evidence="2">Cofactor biosynthesis; 7,8-dihydroneopterin triphosphate biosynthesis; 7,8-dihydroneopterin triphosphate from GTP: step 1/1.</text>
</comment>
<comment type="subunit">
    <text evidence="1">Toroid-shaped homodecamer, composed of two pentamers of five dimers.</text>
</comment>
<comment type="similarity">
    <text evidence="2">Belongs to the GTP cyclohydrolase I family.</text>
</comment>
<reference key="1">
    <citation type="journal article" date="2005" name="Nat. Biotechnol.">
        <title>Genome sequence of the chlorinated compound-respiring bacterium Dehalococcoides species strain CBDB1.</title>
        <authorList>
            <person name="Kube M."/>
            <person name="Beck A."/>
            <person name="Zinder S.H."/>
            <person name="Kuhl H."/>
            <person name="Reinhardt R."/>
            <person name="Adrian L."/>
        </authorList>
    </citation>
    <scope>NUCLEOTIDE SEQUENCE [LARGE SCALE GENOMIC DNA]</scope>
    <source>
        <strain>CBDB1</strain>
    </source>
</reference>
<sequence length="189" mass="21101">MFDEQAIKQSVQNILVAIGEDPDREGLKETPRRVAQMYTELFSGMNQDPAEVLRVGYELGHREMVIIKDIPFYSMCEHHLLPFSGVVHIGYIPNIDGRVVGISKLARVVEIYAKRPQIQERMATQIADAIMDGLKCDGVAVVIEAEHMCMVMRGIKKPGSRVITSALRGSFHKSPAARAEFLSLIQHKG</sequence>
<protein>
    <recommendedName>
        <fullName evidence="2">GTP cyclohydrolase 1</fullName>
        <ecNumber evidence="2">3.5.4.16</ecNumber>
    </recommendedName>
    <alternativeName>
        <fullName evidence="2">GTP cyclohydrolase I</fullName>
        <shortName evidence="2">GTP-CH-I</shortName>
    </alternativeName>
</protein>
<dbReference type="EC" id="3.5.4.16" evidence="2"/>
<dbReference type="EMBL" id="AJ965256">
    <property type="protein sequence ID" value="CAI83216.1"/>
    <property type="molecule type" value="Genomic_DNA"/>
</dbReference>
<dbReference type="RefSeq" id="WP_011309567.1">
    <property type="nucleotide sequence ID" value="NC_007356.1"/>
</dbReference>
<dbReference type="SMR" id="Q3ZYB5"/>
<dbReference type="KEGG" id="deh:cbdbA1120"/>
<dbReference type="HOGENOM" id="CLU_049768_3_3_0"/>
<dbReference type="UniPathway" id="UPA00848">
    <property type="reaction ID" value="UER00151"/>
</dbReference>
<dbReference type="Proteomes" id="UP000000433">
    <property type="component" value="Chromosome"/>
</dbReference>
<dbReference type="GO" id="GO:0005737">
    <property type="term" value="C:cytoplasm"/>
    <property type="evidence" value="ECO:0007669"/>
    <property type="project" value="TreeGrafter"/>
</dbReference>
<dbReference type="GO" id="GO:0005525">
    <property type="term" value="F:GTP binding"/>
    <property type="evidence" value="ECO:0007669"/>
    <property type="project" value="UniProtKB-KW"/>
</dbReference>
<dbReference type="GO" id="GO:0003934">
    <property type="term" value="F:GTP cyclohydrolase I activity"/>
    <property type="evidence" value="ECO:0007669"/>
    <property type="project" value="UniProtKB-UniRule"/>
</dbReference>
<dbReference type="GO" id="GO:0008270">
    <property type="term" value="F:zinc ion binding"/>
    <property type="evidence" value="ECO:0007669"/>
    <property type="project" value="UniProtKB-UniRule"/>
</dbReference>
<dbReference type="GO" id="GO:0006730">
    <property type="term" value="P:one-carbon metabolic process"/>
    <property type="evidence" value="ECO:0007669"/>
    <property type="project" value="UniProtKB-UniRule"/>
</dbReference>
<dbReference type="GO" id="GO:0006729">
    <property type="term" value="P:tetrahydrobiopterin biosynthetic process"/>
    <property type="evidence" value="ECO:0007669"/>
    <property type="project" value="TreeGrafter"/>
</dbReference>
<dbReference type="GO" id="GO:0046654">
    <property type="term" value="P:tetrahydrofolate biosynthetic process"/>
    <property type="evidence" value="ECO:0007669"/>
    <property type="project" value="UniProtKB-UniRule"/>
</dbReference>
<dbReference type="FunFam" id="1.10.286.10:FF:000001">
    <property type="entry name" value="GTP cyclohydrolase 1"/>
    <property type="match status" value="1"/>
</dbReference>
<dbReference type="FunFam" id="3.30.1130.10:FF:000001">
    <property type="entry name" value="GTP cyclohydrolase 1"/>
    <property type="match status" value="1"/>
</dbReference>
<dbReference type="Gene3D" id="1.10.286.10">
    <property type="match status" value="1"/>
</dbReference>
<dbReference type="Gene3D" id="3.30.1130.10">
    <property type="match status" value="1"/>
</dbReference>
<dbReference type="HAMAP" id="MF_00223">
    <property type="entry name" value="FolE"/>
    <property type="match status" value="1"/>
</dbReference>
<dbReference type="InterPro" id="IPR043133">
    <property type="entry name" value="GTP-CH-I_C/QueF"/>
</dbReference>
<dbReference type="InterPro" id="IPR043134">
    <property type="entry name" value="GTP-CH-I_N"/>
</dbReference>
<dbReference type="InterPro" id="IPR001474">
    <property type="entry name" value="GTP_CycHdrlase_I"/>
</dbReference>
<dbReference type="InterPro" id="IPR018234">
    <property type="entry name" value="GTP_CycHdrlase_I_CS"/>
</dbReference>
<dbReference type="InterPro" id="IPR020602">
    <property type="entry name" value="GTP_CycHdrlase_I_dom"/>
</dbReference>
<dbReference type="NCBIfam" id="TIGR00063">
    <property type="entry name" value="folE"/>
    <property type="match status" value="1"/>
</dbReference>
<dbReference type="NCBIfam" id="NF006825">
    <property type="entry name" value="PRK09347.1-2"/>
    <property type="match status" value="1"/>
</dbReference>
<dbReference type="NCBIfam" id="NF006826">
    <property type="entry name" value="PRK09347.1-3"/>
    <property type="match status" value="1"/>
</dbReference>
<dbReference type="PANTHER" id="PTHR11109:SF7">
    <property type="entry name" value="GTP CYCLOHYDROLASE 1"/>
    <property type="match status" value="1"/>
</dbReference>
<dbReference type="PANTHER" id="PTHR11109">
    <property type="entry name" value="GTP CYCLOHYDROLASE I"/>
    <property type="match status" value="1"/>
</dbReference>
<dbReference type="Pfam" id="PF01227">
    <property type="entry name" value="GTP_cyclohydroI"/>
    <property type="match status" value="1"/>
</dbReference>
<dbReference type="SUPFAM" id="SSF55620">
    <property type="entry name" value="Tetrahydrobiopterin biosynthesis enzymes-like"/>
    <property type="match status" value="1"/>
</dbReference>
<dbReference type="PROSITE" id="PS00859">
    <property type="entry name" value="GTP_CYCLOHYDROL_1_1"/>
    <property type="match status" value="1"/>
</dbReference>
<organism>
    <name type="scientific">Dehalococcoides mccartyi (strain CBDB1)</name>
    <dbReference type="NCBI Taxonomy" id="255470"/>
    <lineage>
        <taxon>Bacteria</taxon>
        <taxon>Bacillati</taxon>
        <taxon>Chloroflexota</taxon>
        <taxon>Dehalococcoidia</taxon>
        <taxon>Dehalococcoidales</taxon>
        <taxon>Dehalococcoidaceae</taxon>
        <taxon>Dehalococcoides</taxon>
    </lineage>
</organism>